<keyword id="KW-0119">Carbohydrate metabolism</keyword>
<keyword id="KW-0963">Cytoplasm</keyword>
<keyword id="KW-0413">Isomerase</keyword>
<keyword id="KW-0479">Metal-binding</keyword>
<keyword id="KW-0862">Zinc</keyword>
<feature type="chain" id="PRO_1000197014" description="Phosphoheptose isomerase">
    <location>
        <begin position="1"/>
        <end position="197"/>
    </location>
</feature>
<feature type="domain" description="SIS" evidence="1">
    <location>
        <begin position="34"/>
        <end position="196"/>
    </location>
</feature>
<feature type="binding site" evidence="1">
    <location>
        <begin position="49"/>
        <end position="51"/>
    </location>
    <ligand>
        <name>substrate</name>
    </ligand>
</feature>
<feature type="binding site" evidence="1">
    <location>
        <position position="58"/>
    </location>
    <ligand>
        <name>Zn(2+)</name>
        <dbReference type="ChEBI" id="CHEBI:29105"/>
    </ligand>
</feature>
<feature type="binding site" evidence="1">
    <location>
        <position position="62"/>
    </location>
    <ligand>
        <name>substrate</name>
    </ligand>
</feature>
<feature type="binding site" evidence="1">
    <location>
        <position position="62"/>
    </location>
    <ligand>
        <name>Zn(2+)</name>
        <dbReference type="ChEBI" id="CHEBI:29105"/>
    </ligand>
</feature>
<feature type="binding site" evidence="1">
    <location>
        <begin position="91"/>
        <end position="92"/>
    </location>
    <ligand>
        <name>substrate</name>
    </ligand>
</feature>
<feature type="binding site" evidence="1">
    <location>
        <begin position="117"/>
        <end position="119"/>
    </location>
    <ligand>
        <name>substrate</name>
    </ligand>
</feature>
<feature type="binding site" evidence="1">
    <location>
        <position position="122"/>
    </location>
    <ligand>
        <name>substrate</name>
    </ligand>
</feature>
<feature type="binding site" evidence="1">
    <location>
        <position position="172"/>
    </location>
    <ligand>
        <name>substrate</name>
    </ligand>
</feature>
<feature type="binding site" evidence="1">
    <location>
        <position position="172"/>
    </location>
    <ligand>
        <name>Zn(2+)</name>
        <dbReference type="ChEBI" id="CHEBI:29105"/>
    </ligand>
</feature>
<feature type="binding site" evidence="1">
    <location>
        <position position="180"/>
    </location>
    <ligand>
        <name>Zn(2+)</name>
        <dbReference type="ChEBI" id="CHEBI:29105"/>
    </ligand>
</feature>
<gene>
    <name evidence="1" type="primary">gmhA</name>
    <name type="ordered locus">Shew185_4071</name>
</gene>
<sequence length="197" mass="20989">MLERIKDSFTESIQTKIDAAEALPESIAKAAEMMVHCLLGGNKILACGNGGSAGDAQHFSAELLNRYEIERPPLPAIALSTDTSTITAIANDYSYDEIFSKQIFALGQPGDILLAISTSGNSGNVIKAMEAALSRDMTIVALTGKDGGAMAGLLSVGDVEIRVPSNVTARIQEVHLLVIHCLCDNIDRTLFPQDEQQ</sequence>
<protein>
    <recommendedName>
        <fullName evidence="1">Phosphoheptose isomerase</fullName>
        <ecNumber evidence="1">5.3.1.28</ecNumber>
    </recommendedName>
    <alternativeName>
        <fullName evidence="1">Sedoheptulose 7-phosphate isomerase</fullName>
    </alternativeName>
</protein>
<accession>A6WTQ0</accession>
<comment type="function">
    <text evidence="1">Catalyzes the isomerization of sedoheptulose 7-phosphate in D-glycero-D-manno-heptose 7-phosphate.</text>
</comment>
<comment type="catalytic activity">
    <reaction evidence="1">
        <text>2 D-sedoheptulose 7-phosphate = D-glycero-alpha-D-manno-heptose 7-phosphate + D-glycero-beta-D-manno-heptose 7-phosphate</text>
        <dbReference type="Rhea" id="RHEA:27489"/>
        <dbReference type="ChEBI" id="CHEBI:57483"/>
        <dbReference type="ChEBI" id="CHEBI:60203"/>
        <dbReference type="ChEBI" id="CHEBI:60204"/>
        <dbReference type="EC" id="5.3.1.28"/>
    </reaction>
</comment>
<comment type="cofactor">
    <cofactor evidence="1">
        <name>Zn(2+)</name>
        <dbReference type="ChEBI" id="CHEBI:29105"/>
    </cofactor>
    <text evidence="1">Binds 1 zinc ion per subunit.</text>
</comment>
<comment type="pathway">
    <text evidence="1">Carbohydrate biosynthesis; D-glycero-D-manno-heptose 7-phosphate biosynthesis; D-glycero-alpha-D-manno-heptose 7-phosphate and D-glycero-beta-D-manno-heptose 7-phosphate from sedoheptulose 7-phosphate: step 1/1.</text>
</comment>
<comment type="subunit">
    <text evidence="1">Homotetramer.</text>
</comment>
<comment type="subcellular location">
    <subcellularLocation>
        <location evidence="1">Cytoplasm</location>
    </subcellularLocation>
</comment>
<comment type="miscellaneous">
    <text evidence="1">The reaction produces a racemic mixture of D-glycero-alpha-D-manno-heptose 7-phosphate and D-glycero-beta-D-manno-heptose 7-phosphate.</text>
</comment>
<comment type="similarity">
    <text evidence="1">Belongs to the SIS family. GmhA subfamily.</text>
</comment>
<name>GMHA_SHEB8</name>
<dbReference type="EC" id="5.3.1.28" evidence="1"/>
<dbReference type="EMBL" id="CP000753">
    <property type="protein sequence ID" value="ABS10189.1"/>
    <property type="molecule type" value="Genomic_DNA"/>
</dbReference>
<dbReference type="RefSeq" id="WP_006083530.1">
    <property type="nucleotide sequence ID" value="NC_009665.1"/>
</dbReference>
<dbReference type="SMR" id="A6WTQ0"/>
<dbReference type="KEGG" id="sbm:Shew185_4071"/>
<dbReference type="HOGENOM" id="CLU_080999_4_0_6"/>
<dbReference type="UniPathway" id="UPA00041">
    <property type="reaction ID" value="UER00436"/>
</dbReference>
<dbReference type="GO" id="GO:0005737">
    <property type="term" value="C:cytoplasm"/>
    <property type="evidence" value="ECO:0007669"/>
    <property type="project" value="UniProtKB-SubCell"/>
</dbReference>
<dbReference type="GO" id="GO:0097367">
    <property type="term" value="F:carbohydrate derivative binding"/>
    <property type="evidence" value="ECO:0007669"/>
    <property type="project" value="InterPro"/>
</dbReference>
<dbReference type="GO" id="GO:0008968">
    <property type="term" value="F:D-sedoheptulose 7-phosphate isomerase activity"/>
    <property type="evidence" value="ECO:0007669"/>
    <property type="project" value="UniProtKB-UniRule"/>
</dbReference>
<dbReference type="GO" id="GO:0008270">
    <property type="term" value="F:zinc ion binding"/>
    <property type="evidence" value="ECO:0007669"/>
    <property type="project" value="UniProtKB-UniRule"/>
</dbReference>
<dbReference type="GO" id="GO:0005975">
    <property type="term" value="P:carbohydrate metabolic process"/>
    <property type="evidence" value="ECO:0007669"/>
    <property type="project" value="UniProtKB-UniRule"/>
</dbReference>
<dbReference type="GO" id="GO:2001061">
    <property type="term" value="P:D-glycero-D-manno-heptose 7-phosphate biosynthetic process"/>
    <property type="evidence" value="ECO:0007669"/>
    <property type="project" value="UniProtKB-UniPathway"/>
</dbReference>
<dbReference type="CDD" id="cd05006">
    <property type="entry name" value="SIS_GmhA"/>
    <property type="match status" value="1"/>
</dbReference>
<dbReference type="Gene3D" id="3.40.50.10490">
    <property type="entry name" value="Glucose-6-phosphate isomerase like protein, domain 1"/>
    <property type="match status" value="1"/>
</dbReference>
<dbReference type="HAMAP" id="MF_00067">
    <property type="entry name" value="GmhA"/>
    <property type="match status" value="1"/>
</dbReference>
<dbReference type="InterPro" id="IPR035461">
    <property type="entry name" value="GmhA/DiaA"/>
</dbReference>
<dbReference type="InterPro" id="IPR004515">
    <property type="entry name" value="Phosphoheptose_Isoase"/>
</dbReference>
<dbReference type="InterPro" id="IPR001347">
    <property type="entry name" value="SIS_dom"/>
</dbReference>
<dbReference type="InterPro" id="IPR046348">
    <property type="entry name" value="SIS_dom_sf"/>
</dbReference>
<dbReference type="InterPro" id="IPR050099">
    <property type="entry name" value="SIS_GmhA/DiaA_subfam"/>
</dbReference>
<dbReference type="NCBIfam" id="NF010546">
    <property type="entry name" value="PRK13936.1"/>
    <property type="match status" value="1"/>
</dbReference>
<dbReference type="PANTHER" id="PTHR30390:SF6">
    <property type="entry name" value="DNAA INITIATOR-ASSOCIATING PROTEIN DIAA"/>
    <property type="match status" value="1"/>
</dbReference>
<dbReference type="PANTHER" id="PTHR30390">
    <property type="entry name" value="SEDOHEPTULOSE 7-PHOSPHATE ISOMERASE / DNAA INITIATOR-ASSOCIATING FACTOR FOR REPLICATION INITIATION"/>
    <property type="match status" value="1"/>
</dbReference>
<dbReference type="Pfam" id="PF13580">
    <property type="entry name" value="SIS_2"/>
    <property type="match status" value="1"/>
</dbReference>
<dbReference type="SUPFAM" id="SSF53697">
    <property type="entry name" value="SIS domain"/>
    <property type="match status" value="1"/>
</dbReference>
<dbReference type="PROSITE" id="PS51464">
    <property type="entry name" value="SIS"/>
    <property type="match status" value="1"/>
</dbReference>
<reference key="1">
    <citation type="submission" date="2007-07" db="EMBL/GenBank/DDBJ databases">
        <title>Complete sequence of chromosome of Shewanella baltica OS185.</title>
        <authorList>
            <consortium name="US DOE Joint Genome Institute"/>
            <person name="Copeland A."/>
            <person name="Lucas S."/>
            <person name="Lapidus A."/>
            <person name="Barry K."/>
            <person name="Glavina del Rio T."/>
            <person name="Dalin E."/>
            <person name="Tice H."/>
            <person name="Pitluck S."/>
            <person name="Sims D."/>
            <person name="Brettin T."/>
            <person name="Bruce D."/>
            <person name="Detter J.C."/>
            <person name="Han C."/>
            <person name="Schmutz J."/>
            <person name="Larimer F."/>
            <person name="Land M."/>
            <person name="Hauser L."/>
            <person name="Kyrpides N."/>
            <person name="Mikhailova N."/>
            <person name="Brettar I."/>
            <person name="Rodrigues J."/>
            <person name="Konstantinidis K."/>
            <person name="Tiedje J."/>
            <person name="Richardson P."/>
        </authorList>
    </citation>
    <scope>NUCLEOTIDE SEQUENCE [LARGE SCALE GENOMIC DNA]</scope>
    <source>
        <strain>OS185</strain>
    </source>
</reference>
<organism>
    <name type="scientific">Shewanella baltica (strain OS185)</name>
    <dbReference type="NCBI Taxonomy" id="402882"/>
    <lineage>
        <taxon>Bacteria</taxon>
        <taxon>Pseudomonadati</taxon>
        <taxon>Pseudomonadota</taxon>
        <taxon>Gammaproteobacteria</taxon>
        <taxon>Alteromonadales</taxon>
        <taxon>Shewanellaceae</taxon>
        <taxon>Shewanella</taxon>
    </lineage>
</organism>
<proteinExistence type="inferred from homology"/>
<evidence type="ECO:0000255" key="1">
    <source>
        <dbReference type="HAMAP-Rule" id="MF_00067"/>
    </source>
</evidence>